<accession>P17720</accession>
<evidence type="ECO:0000255" key="1">
    <source>
        <dbReference type="PROSITE-ProRule" id="PRU00085"/>
    </source>
</evidence>
<evidence type="ECO:0000269" key="2">
    <source>
    </source>
</evidence>
<evidence type="ECO:0000305" key="3"/>
<dbReference type="SMR" id="P17720"/>
<dbReference type="iPTMnet" id="P17720"/>
<dbReference type="GO" id="GO:0005737">
    <property type="term" value="C:cytoplasm"/>
    <property type="evidence" value="ECO:0007669"/>
    <property type="project" value="TreeGrafter"/>
</dbReference>
<dbReference type="GO" id="GO:0008199">
    <property type="term" value="F:ferric iron binding"/>
    <property type="evidence" value="ECO:0007669"/>
    <property type="project" value="InterPro"/>
</dbReference>
<dbReference type="GO" id="GO:0008198">
    <property type="term" value="F:ferrous iron binding"/>
    <property type="evidence" value="ECO:0007669"/>
    <property type="project" value="TreeGrafter"/>
</dbReference>
<dbReference type="GO" id="GO:0003723">
    <property type="term" value="F:RNA binding"/>
    <property type="evidence" value="ECO:0007669"/>
    <property type="project" value="UniProtKB-KW"/>
</dbReference>
<dbReference type="GO" id="GO:0006879">
    <property type="term" value="P:intracellular iron ion homeostasis"/>
    <property type="evidence" value="ECO:0007669"/>
    <property type="project" value="UniProtKB-KW"/>
</dbReference>
<dbReference type="GO" id="GO:0006826">
    <property type="term" value="P:iron ion transport"/>
    <property type="evidence" value="ECO:0007669"/>
    <property type="project" value="InterPro"/>
</dbReference>
<dbReference type="CDD" id="cd01056">
    <property type="entry name" value="Euk_Ferritin"/>
    <property type="match status" value="1"/>
</dbReference>
<dbReference type="Gene3D" id="1.20.1260.10">
    <property type="match status" value="1"/>
</dbReference>
<dbReference type="InterPro" id="IPR001519">
    <property type="entry name" value="Ferritin"/>
</dbReference>
<dbReference type="InterPro" id="IPR012347">
    <property type="entry name" value="Ferritin-like"/>
</dbReference>
<dbReference type="InterPro" id="IPR009040">
    <property type="entry name" value="Ferritin-like_diiron"/>
</dbReference>
<dbReference type="InterPro" id="IPR009078">
    <property type="entry name" value="Ferritin-like_SF"/>
</dbReference>
<dbReference type="InterPro" id="IPR008331">
    <property type="entry name" value="Ferritin_DPS_dom"/>
</dbReference>
<dbReference type="PANTHER" id="PTHR11431">
    <property type="entry name" value="FERRITIN"/>
    <property type="match status" value="1"/>
</dbReference>
<dbReference type="PANTHER" id="PTHR11431:SF75">
    <property type="entry name" value="FERRITIN"/>
    <property type="match status" value="1"/>
</dbReference>
<dbReference type="Pfam" id="PF00210">
    <property type="entry name" value="Ferritin"/>
    <property type="match status" value="1"/>
</dbReference>
<dbReference type="SUPFAM" id="SSF47240">
    <property type="entry name" value="Ferritin-like"/>
    <property type="match status" value="1"/>
</dbReference>
<dbReference type="PROSITE" id="PS50905">
    <property type="entry name" value="FERRITIN_LIKE"/>
    <property type="match status" value="1"/>
</dbReference>
<comment type="developmental stage">
    <text>Cyst.</text>
</comment>
<comment type="miscellaneous">
    <text>Artemin is elongation factor-associated and self-associating.</text>
</comment>
<comment type="similarity">
    <text evidence="3">Belongs to the ferritin family.</text>
</comment>
<reference key="1">
    <citation type="journal article" date="1990" name="Eur. J. Biochem.">
        <title>The primary structure of artemin from Artemia cysts.</title>
        <authorList>
            <person name="de Graaf J."/>
            <person name="Amons R."/>
            <person name="Moeller W."/>
        </authorList>
    </citation>
    <scope>PROTEIN SEQUENCE</scope>
    <scope>ACETYLATION AT ALA-1</scope>
</reference>
<name>ARTM_ARTSA</name>
<sequence>ATEGARNIGQSAPEGKVQMDCPSRHNFDPECEKAFVEHIHLELASSYHAWSMWAFYARDCKAAVGMTRLCEWASHVSAQRARRMAAYVLTRGGHVDYKEIPAPKKQGWDNFEDAFSHCVANKKRILTSLQSLYQCCQSKDAHCSNFIQTDMMDEVIAWNKFLSDCLSNLHCIGSQGMGPWVFDRWLARIVMSKFKHPKIPSLSTSDLESNIPNELFDAEGDMVRAIKKL</sequence>
<organism>
    <name type="scientific">Artemia salina</name>
    <name type="common">Brine shrimp</name>
    <dbReference type="NCBI Taxonomy" id="85549"/>
    <lineage>
        <taxon>Eukaryota</taxon>
        <taxon>Metazoa</taxon>
        <taxon>Ecdysozoa</taxon>
        <taxon>Arthropoda</taxon>
        <taxon>Crustacea</taxon>
        <taxon>Branchiopoda</taxon>
        <taxon>Anostraca</taxon>
        <taxon>Artemiidae</taxon>
        <taxon>Artemia</taxon>
    </lineage>
</organism>
<protein>
    <recommendedName>
        <fullName>Artemin</fullName>
    </recommendedName>
</protein>
<feature type="chain" id="PRO_0000201099" description="Artemin">
    <location>
        <begin position="1"/>
        <end position="229"/>
    </location>
</feature>
<feature type="domain" description="Ferritin-like diiron" evidence="1">
    <location>
        <begin position="25"/>
        <end position="173"/>
    </location>
</feature>
<feature type="modified residue" description="N-acetylalanine" evidence="2">
    <location>
        <position position="1"/>
    </location>
</feature>
<feature type="sequence variant">
    <original>N</original>
    <variation>K</variation>
    <location>
        <position position="7"/>
    </location>
</feature>
<feature type="sequence variant">
    <original>I</original>
    <variation>V</variation>
    <location>
        <position position="8"/>
    </location>
</feature>
<feature type="sequence variant">
    <original>V</original>
    <variation>M</variation>
    <location>
        <position position="223"/>
    </location>
</feature>
<proteinExistence type="evidence at protein level"/>
<keyword id="KW-0007">Acetylation</keyword>
<keyword id="KW-0903">Direct protein sequencing</keyword>
<keyword id="KW-0408">Iron</keyword>
<keyword id="KW-0409">Iron storage</keyword>
<keyword id="KW-0479">Metal-binding</keyword>
<keyword id="KW-0694">RNA-binding</keyword>